<comment type="function">
    <text evidence="1">May help in the organization of the PsaL subunit.</text>
</comment>
<comment type="subcellular location">
    <subcellularLocation>
        <location evidence="1">Plastid</location>
        <location evidence="1">Chloroplast thylakoid membrane</location>
        <topology evidence="1">Single-pass membrane protein</topology>
    </subcellularLocation>
</comment>
<comment type="similarity">
    <text evidence="1">Belongs to the PsaI family.</text>
</comment>
<gene>
    <name evidence="1" type="primary">psaI</name>
</gene>
<sequence>MTAAYLPSILVPLVGLVFPAIAMASLFLYIEEQQIS</sequence>
<organism>
    <name type="scientific">Oltmannsiellopsis viridis</name>
    <name type="common">Marine flagellate</name>
    <name type="synonym">Oltmannsiella viridis</name>
    <dbReference type="NCBI Taxonomy" id="51324"/>
    <lineage>
        <taxon>Eukaryota</taxon>
        <taxon>Viridiplantae</taxon>
        <taxon>Chlorophyta</taxon>
        <taxon>Ulvophyceae</taxon>
        <taxon>Oltmannsiellopsidales</taxon>
        <taxon>Oltmannsiellopsidaceae</taxon>
        <taxon>Oltmannsiellopsis</taxon>
    </lineage>
</organism>
<feature type="chain" id="PRO_0000276030" description="Photosystem I reaction center subunit VIII">
    <location>
        <begin position="1"/>
        <end position="36"/>
    </location>
</feature>
<feature type="transmembrane region" description="Helical" evidence="1">
    <location>
        <begin position="9"/>
        <end position="29"/>
    </location>
</feature>
<dbReference type="EMBL" id="DQ291132">
    <property type="protein sequence ID" value="ABB81984.1"/>
    <property type="molecule type" value="Genomic_DNA"/>
</dbReference>
<dbReference type="RefSeq" id="YP_635823.1">
    <property type="nucleotide sequence ID" value="NC_008099.1"/>
</dbReference>
<dbReference type="SMR" id="Q20F22"/>
<dbReference type="GeneID" id="4100194"/>
<dbReference type="GO" id="GO:0009535">
    <property type="term" value="C:chloroplast thylakoid membrane"/>
    <property type="evidence" value="ECO:0007669"/>
    <property type="project" value="UniProtKB-SubCell"/>
</dbReference>
<dbReference type="GO" id="GO:0009522">
    <property type="term" value="C:photosystem I"/>
    <property type="evidence" value="ECO:0007669"/>
    <property type="project" value="UniProtKB-KW"/>
</dbReference>
<dbReference type="GO" id="GO:0015979">
    <property type="term" value="P:photosynthesis"/>
    <property type="evidence" value="ECO:0007669"/>
    <property type="project" value="UniProtKB-UniRule"/>
</dbReference>
<dbReference type="HAMAP" id="MF_00431">
    <property type="entry name" value="PSI_PsaI"/>
    <property type="match status" value="1"/>
</dbReference>
<dbReference type="InterPro" id="IPR001302">
    <property type="entry name" value="PSI_PsaI"/>
</dbReference>
<dbReference type="InterPro" id="IPR036357">
    <property type="entry name" value="PSI_PsaI_sf"/>
</dbReference>
<dbReference type="NCBIfam" id="NF008830">
    <property type="entry name" value="PRK11877.1"/>
    <property type="match status" value="1"/>
</dbReference>
<dbReference type="NCBIfam" id="TIGR03052">
    <property type="entry name" value="PS_I_psaI"/>
    <property type="match status" value="1"/>
</dbReference>
<dbReference type="PANTHER" id="PTHR35775">
    <property type="match status" value="1"/>
</dbReference>
<dbReference type="PANTHER" id="PTHR35775:SF2">
    <property type="entry name" value="PHOTOSYSTEM I REACTION CENTER SUBUNIT VIII"/>
    <property type="match status" value="1"/>
</dbReference>
<dbReference type="Pfam" id="PF00796">
    <property type="entry name" value="PSI_8"/>
    <property type="match status" value="1"/>
</dbReference>
<dbReference type="SUPFAM" id="SSF81540">
    <property type="entry name" value="Subunit VIII of photosystem I reaction centre, PsaI"/>
    <property type="match status" value="1"/>
</dbReference>
<evidence type="ECO:0000255" key="1">
    <source>
        <dbReference type="HAMAP-Rule" id="MF_00431"/>
    </source>
</evidence>
<name>PSAI_OLTVI</name>
<accession>Q20F22</accession>
<reference key="1">
    <citation type="journal article" date="2006" name="BMC Biol.">
        <title>The complete chloroplast DNA sequence of the green alga Oltmannsiellopsis viridis reveals a distinctive quadripartite architecture in the chloroplast genome of early diverging ulvophytes.</title>
        <authorList>
            <person name="Pombert J.-F."/>
            <person name="Lemieux C."/>
            <person name="Turmel M."/>
        </authorList>
    </citation>
    <scope>NUCLEOTIDE SEQUENCE [LARGE SCALE GENOMIC DNA]</scope>
</reference>
<geneLocation type="chloroplast"/>
<protein>
    <recommendedName>
        <fullName evidence="1">Photosystem I reaction center subunit VIII</fullName>
        <shortName evidence="1">PSI-I</shortName>
    </recommendedName>
</protein>
<keyword id="KW-0150">Chloroplast</keyword>
<keyword id="KW-0472">Membrane</keyword>
<keyword id="KW-0602">Photosynthesis</keyword>
<keyword id="KW-0603">Photosystem I</keyword>
<keyword id="KW-0934">Plastid</keyword>
<keyword id="KW-0793">Thylakoid</keyword>
<keyword id="KW-0812">Transmembrane</keyword>
<keyword id="KW-1133">Transmembrane helix</keyword>
<proteinExistence type="inferred from homology"/>